<gene>
    <name evidence="1" type="primary">greA</name>
    <name type="ordered locus">Mlg_1980</name>
</gene>
<proteinExistence type="inferred from homology"/>
<reference key="1">
    <citation type="submission" date="2006-08" db="EMBL/GenBank/DDBJ databases">
        <title>Complete sequence of Alkalilimnicola ehrilichei MLHE-1.</title>
        <authorList>
            <person name="Copeland A."/>
            <person name="Lucas S."/>
            <person name="Lapidus A."/>
            <person name="Barry K."/>
            <person name="Detter J.C."/>
            <person name="Glavina del Rio T."/>
            <person name="Hammon N."/>
            <person name="Israni S."/>
            <person name="Dalin E."/>
            <person name="Tice H."/>
            <person name="Pitluck S."/>
            <person name="Sims D."/>
            <person name="Brettin T."/>
            <person name="Bruce D."/>
            <person name="Han C."/>
            <person name="Tapia R."/>
            <person name="Gilna P."/>
            <person name="Schmutz J."/>
            <person name="Larimer F."/>
            <person name="Land M."/>
            <person name="Hauser L."/>
            <person name="Kyrpides N."/>
            <person name="Mikhailova N."/>
            <person name="Oremland R.S."/>
            <person name="Hoeft S.E."/>
            <person name="Switzer-Blum J."/>
            <person name="Kulp T."/>
            <person name="King G."/>
            <person name="Tabita R."/>
            <person name="Witte B."/>
            <person name="Santini J.M."/>
            <person name="Basu P."/>
            <person name="Hollibaugh J.T."/>
            <person name="Xie G."/>
            <person name="Stolz J.F."/>
            <person name="Richardson P."/>
        </authorList>
    </citation>
    <scope>NUCLEOTIDE SEQUENCE [LARGE SCALE GENOMIC DNA]</scope>
    <source>
        <strain>ATCC BAA-1101 / DSM 17681 / MLHE-1</strain>
    </source>
</reference>
<accession>Q0A765</accession>
<dbReference type="EMBL" id="CP000453">
    <property type="protein sequence ID" value="ABI57322.1"/>
    <property type="molecule type" value="Genomic_DNA"/>
</dbReference>
<dbReference type="RefSeq" id="WP_011629716.1">
    <property type="nucleotide sequence ID" value="NC_008340.1"/>
</dbReference>
<dbReference type="SMR" id="Q0A765"/>
<dbReference type="KEGG" id="aeh:Mlg_1980"/>
<dbReference type="eggNOG" id="COG0782">
    <property type="taxonomic scope" value="Bacteria"/>
</dbReference>
<dbReference type="HOGENOM" id="CLU_101379_2_0_6"/>
<dbReference type="OrthoDB" id="9808774at2"/>
<dbReference type="Proteomes" id="UP000001962">
    <property type="component" value="Chromosome"/>
</dbReference>
<dbReference type="GO" id="GO:0003677">
    <property type="term" value="F:DNA binding"/>
    <property type="evidence" value="ECO:0007669"/>
    <property type="project" value="UniProtKB-UniRule"/>
</dbReference>
<dbReference type="GO" id="GO:0070063">
    <property type="term" value="F:RNA polymerase binding"/>
    <property type="evidence" value="ECO:0007669"/>
    <property type="project" value="InterPro"/>
</dbReference>
<dbReference type="GO" id="GO:0006354">
    <property type="term" value="P:DNA-templated transcription elongation"/>
    <property type="evidence" value="ECO:0007669"/>
    <property type="project" value="TreeGrafter"/>
</dbReference>
<dbReference type="GO" id="GO:0032784">
    <property type="term" value="P:regulation of DNA-templated transcription elongation"/>
    <property type="evidence" value="ECO:0007669"/>
    <property type="project" value="UniProtKB-UniRule"/>
</dbReference>
<dbReference type="FunFam" id="1.10.287.180:FF:000001">
    <property type="entry name" value="Transcription elongation factor GreA"/>
    <property type="match status" value="1"/>
</dbReference>
<dbReference type="FunFam" id="3.10.50.30:FF:000001">
    <property type="entry name" value="Transcription elongation factor GreA"/>
    <property type="match status" value="1"/>
</dbReference>
<dbReference type="Gene3D" id="3.10.50.30">
    <property type="entry name" value="Transcription elongation factor, GreA/GreB, C-terminal domain"/>
    <property type="match status" value="1"/>
</dbReference>
<dbReference type="Gene3D" id="1.10.287.180">
    <property type="entry name" value="Transcription elongation factor, GreA/GreB, N-terminal domain"/>
    <property type="match status" value="1"/>
</dbReference>
<dbReference type="HAMAP" id="MF_00105">
    <property type="entry name" value="GreA_GreB"/>
    <property type="match status" value="1"/>
</dbReference>
<dbReference type="InterPro" id="IPR036953">
    <property type="entry name" value="GreA/GreB_C_sf"/>
</dbReference>
<dbReference type="InterPro" id="IPR018151">
    <property type="entry name" value="TF_GreA/GreB_CS"/>
</dbReference>
<dbReference type="InterPro" id="IPR006359">
    <property type="entry name" value="Tscrpt_elong_fac_GreA"/>
</dbReference>
<dbReference type="InterPro" id="IPR028624">
    <property type="entry name" value="Tscrpt_elong_fac_GreA/B"/>
</dbReference>
<dbReference type="InterPro" id="IPR001437">
    <property type="entry name" value="Tscrpt_elong_fac_GreA/B_C"/>
</dbReference>
<dbReference type="InterPro" id="IPR023459">
    <property type="entry name" value="Tscrpt_elong_fac_GreA/B_fam"/>
</dbReference>
<dbReference type="InterPro" id="IPR022691">
    <property type="entry name" value="Tscrpt_elong_fac_GreA/B_N"/>
</dbReference>
<dbReference type="InterPro" id="IPR036805">
    <property type="entry name" value="Tscrpt_elong_fac_GreA/B_N_sf"/>
</dbReference>
<dbReference type="NCBIfam" id="TIGR01462">
    <property type="entry name" value="greA"/>
    <property type="match status" value="1"/>
</dbReference>
<dbReference type="NCBIfam" id="NF001261">
    <property type="entry name" value="PRK00226.1-2"/>
    <property type="match status" value="1"/>
</dbReference>
<dbReference type="NCBIfam" id="NF001263">
    <property type="entry name" value="PRK00226.1-4"/>
    <property type="match status" value="1"/>
</dbReference>
<dbReference type="NCBIfam" id="NF001264">
    <property type="entry name" value="PRK00226.1-5"/>
    <property type="match status" value="1"/>
</dbReference>
<dbReference type="PANTHER" id="PTHR30437">
    <property type="entry name" value="TRANSCRIPTION ELONGATION FACTOR GREA"/>
    <property type="match status" value="1"/>
</dbReference>
<dbReference type="PANTHER" id="PTHR30437:SF4">
    <property type="entry name" value="TRANSCRIPTION ELONGATION FACTOR GREA"/>
    <property type="match status" value="1"/>
</dbReference>
<dbReference type="Pfam" id="PF01272">
    <property type="entry name" value="GreA_GreB"/>
    <property type="match status" value="1"/>
</dbReference>
<dbReference type="Pfam" id="PF03449">
    <property type="entry name" value="GreA_GreB_N"/>
    <property type="match status" value="1"/>
</dbReference>
<dbReference type="PIRSF" id="PIRSF006092">
    <property type="entry name" value="GreA_GreB"/>
    <property type="match status" value="1"/>
</dbReference>
<dbReference type="SUPFAM" id="SSF54534">
    <property type="entry name" value="FKBP-like"/>
    <property type="match status" value="1"/>
</dbReference>
<dbReference type="SUPFAM" id="SSF46557">
    <property type="entry name" value="GreA transcript cleavage protein, N-terminal domain"/>
    <property type="match status" value="1"/>
</dbReference>
<dbReference type="PROSITE" id="PS00829">
    <property type="entry name" value="GREAB_1"/>
    <property type="match status" value="1"/>
</dbReference>
<dbReference type="PROSITE" id="PS00830">
    <property type="entry name" value="GREAB_2"/>
    <property type="match status" value="1"/>
</dbReference>
<organism>
    <name type="scientific">Alkalilimnicola ehrlichii (strain ATCC BAA-1101 / DSM 17681 / MLHE-1)</name>
    <dbReference type="NCBI Taxonomy" id="187272"/>
    <lineage>
        <taxon>Bacteria</taxon>
        <taxon>Pseudomonadati</taxon>
        <taxon>Pseudomonadota</taxon>
        <taxon>Gammaproteobacteria</taxon>
        <taxon>Chromatiales</taxon>
        <taxon>Ectothiorhodospiraceae</taxon>
        <taxon>Alkalilimnicola</taxon>
    </lineage>
</organism>
<protein>
    <recommendedName>
        <fullName evidence="1">Transcription elongation factor GreA</fullName>
    </recommendedName>
    <alternativeName>
        <fullName evidence="1">Transcript cleavage factor GreA</fullName>
    </alternativeName>
</protein>
<evidence type="ECO:0000255" key="1">
    <source>
        <dbReference type="HAMAP-Rule" id="MF_00105"/>
    </source>
</evidence>
<comment type="function">
    <text evidence="1">Necessary for efficient RNA polymerase transcription elongation past template-encoded arresting sites. The arresting sites in DNA have the property of trapping a certain fraction of elongating RNA polymerases that pass through, resulting in locked ternary complexes. Cleavage of the nascent transcript by cleavage factors such as GreA or GreB allows the resumption of elongation from the new 3'terminus. GreA releases sequences of 2 to 3 nucleotides.</text>
</comment>
<comment type="similarity">
    <text evidence="1">Belongs to the GreA/GreB family.</text>
</comment>
<feature type="chain" id="PRO_1000034244" description="Transcription elongation factor GreA">
    <location>
        <begin position="1"/>
        <end position="158"/>
    </location>
</feature>
<feature type="coiled-coil region" evidence="1">
    <location>
        <begin position="53"/>
        <end position="73"/>
    </location>
</feature>
<sequence>MSKVPLTARGAEKLREELQRLKTVERPRIIQAIAEAREHGDLKENAEYHAAREQQSFVEGRIQEIEGKLSNAQVIDPAAVNAQGKVIFGATVDLVDEDSGKEVTYQIVGEDEADIKQGLVSVNSPIARALIGKEEGDLVTVQAPGGEREYEIVEVRYS</sequence>
<keyword id="KW-0175">Coiled coil</keyword>
<keyword id="KW-0238">DNA-binding</keyword>
<keyword id="KW-1185">Reference proteome</keyword>
<keyword id="KW-0804">Transcription</keyword>
<keyword id="KW-0805">Transcription regulation</keyword>
<name>GREA_ALKEH</name>